<evidence type="ECO:0000255" key="1">
    <source>
        <dbReference type="HAMAP-Rule" id="MF_00073"/>
    </source>
</evidence>
<keyword id="KW-1185">Reference proteome</keyword>
<keyword id="KW-0694">RNA-binding</keyword>
<keyword id="KW-0804">Transcription</keyword>
<keyword id="KW-0889">Transcription antitermination</keyword>
<keyword id="KW-0805">Transcription regulation</keyword>
<dbReference type="EMBL" id="BA000043">
    <property type="protein sequence ID" value="BAD76682.1"/>
    <property type="molecule type" value="Genomic_DNA"/>
</dbReference>
<dbReference type="RefSeq" id="WP_011231879.1">
    <property type="nucleotide sequence ID" value="NC_006510.1"/>
</dbReference>
<dbReference type="SMR" id="Q5KXA4"/>
<dbReference type="STRING" id="235909.GK2397"/>
<dbReference type="GeneID" id="32064282"/>
<dbReference type="KEGG" id="gka:GK2397"/>
<dbReference type="eggNOG" id="COG0781">
    <property type="taxonomic scope" value="Bacteria"/>
</dbReference>
<dbReference type="HOGENOM" id="CLU_087843_3_3_9"/>
<dbReference type="Proteomes" id="UP000001172">
    <property type="component" value="Chromosome"/>
</dbReference>
<dbReference type="GO" id="GO:0005829">
    <property type="term" value="C:cytosol"/>
    <property type="evidence" value="ECO:0007669"/>
    <property type="project" value="TreeGrafter"/>
</dbReference>
<dbReference type="GO" id="GO:0003723">
    <property type="term" value="F:RNA binding"/>
    <property type="evidence" value="ECO:0007669"/>
    <property type="project" value="UniProtKB-UniRule"/>
</dbReference>
<dbReference type="GO" id="GO:0006353">
    <property type="term" value="P:DNA-templated transcription termination"/>
    <property type="evidence" value="ECO:0007669"/>
    <property type="project" value="UniProtKB-UniRule"/>
</dbReference>
<dbReference type="GO" id="GO:0031564">
    <property type="term" value="P:transcription antitermination"/>
    <property type="evidence" value="ECO:0007669"/>
    <property type="project" value="UniProtKB-KW"/>
</dbReference>
<dbReference type="CDD" id="cd00619">
    <property type="entry name" value="Terminator_NusB"/>
    <property type="match status" value="1"/>
</dbReference>
<dbReference type="Gene3D" id="1.10.940.10">
    <property type="entry name" value="NusB-like"/>
    <property type="match status" value="1"/>
</dbReference>
<dbReference type="HAMAP" id="MF_00073">
    <property type="entry name" value="NusB"/>
    <property type="match status" value="1"/>
</dbReference>
<dbReference type="InterPro" id="IPR035926">
    <property type="entry name" value="NusB-like_sf"/>
</dbReference>
<dbReference type="InterPro" id="IPR011605">
    <property type="entry name" value="NusB_fam"/>
</dbReference>
<dbReference type="InterPro" id="IPR006027">
    <property type="entry name" value="NusB_RsmB_TIM44"/>
</dbReference>
<dbReference type="NCBIfam" id="TIGR01951">
    <property type="entry name" value="nusB"/>
    <property type="match status" value="1"/>
</dbReference>
<dbReference type="PANTHER" id="PTHR11078:SF3">
    <property type="entry name" value="ANTITERMINATION NUSB DOMAIN-CONTAINING PROTEIN"/>
    <property type="match status" value="1"/>
</dbReference>
<dbReference type="PANTHER" id="PTHR11078">
    <property type="entry name" value="N UTILIZATION SUBSTANCE PROTEIN B-RELATED"/>
    <property type="match status" value="1"/>
</dbReference>
<dbReference type="Pfam" id="PF01029">
    <property type="entry name" value="NusB"/>
    <property type="match status" value="1"/>
</dbReference>
<dbReference type="SUPFAM" id="SSF48013">
    <property type="entry name" value="NusB-like"/>
    <property type="match status" value="1"/>
</dbReference>
<protein>
    <recommendedName>
        <fullName evidence="1">Transcription antitermination protein NusB</fullName>
    </recommendedName>
    <alternativeName>
        <fullName evidence="1">Antitermination factor NusB</fullName>
    </alternativeName>
</protein>
<proteinExistence type="inferred from homology"/>
<organism>
    <name type="scientific">Geobacillus kaustophilus (strain HTA426)</name>
    <dbReference type="NCBI Taxonomy" id="235909"/>
    <lineage>
        <taxon>Bacteria</taxon>
        <taxon>Bacillati</taxon>
        <taxon>Bacillota</taxon>
        <taxon>Bacilli</taxon>
        <taxon>Bacillales</taxon>
        <taxon>Anoxybacillaceae</taxon>
        <taxon>Geobacillus</taxon>
        <taxon>Geobacillus thermoleovorans group</taxon>
    </lineage>
</organism>
<comment type="function">
    <text evidence="1">Involved in transcription antitermination. Required for transcription of ribosomal RNA (rRNA) genes. Binds specifically to the boxA antiterminator sequence of the ribosomal RNA (rrn) operons.</text>
</comment>
<comment type="similarity">
    <text evidence="1">Belongs to the NusB family.</text>
</comment>
<reference key="1">
    <citation type="journal article" date="2004" name="Nucleic Acids Res.">
        <title>Thermoadaptation trait revealed by the genome sequence of thermophilic Geobacillus kaustophilus.</title>
        <authorList>
            <person name="Takami H."/>
            <person name="Takaki Y."/>
            <person name="Chee G.-J."/>
            <person name="Nishi S."/>
            <person name="Shimamura S."/>
            <person name="Suzuki H."/>
            <person name="Matsui S."/>
            <person name="Uchiyama I."/>
        </authorList>
    </citation>
    <scope>NUCLEOTIDE SEQUENCE [LARGE SCALE GENOMIC DNA]</scope>
    <source>
        <strain>HTA426</strain>
    </source>
</reference>
<name>NUSB_GEOKA</name>
<accession>Q5KXA4</accession>
<gene>
    <name evidence="1" type="primary">nusB</name>
    <name type="ordered locus">GK2397</name>
</gene>
<sequence length="130" mass="14632">MKRHEAREKALQALFQIDVGRIPPDEALHNVTGGGDIDPFLRQLVFGVVEHQEEIDELLRANLEKWTLERVANVDRAILRMATYEMKYADDVPVSVSLDEAVELAKKFGDWKSGSFVNGVLSKVKAALQK</sequence>
<feature type="chain" id="PRO_0000265523" description="Transcription antitermination protein NusB">
    <location>
        <begin position="1"/>
        <end position="130"/>
    </location>
</feature>